<protein>
    <recommendedName>
        <fullName>Phospho-2-dehydro-3-deoxyheptonate aldolase</fullName>
        <ecNumber>2.5.1.54</ecNumber>
    </recommendedName>
    <alternativeName>
        <fullName>3-deoxy-D-arabino-heptulosonate 7-phosphate synthase</fullName>
    </alternativeName>
    <alternativeName>
        <fullName>DAHP synthase</fullName>
    </alternativeName>
    <alternativeName>
        <fullName>Phospho-2-keto-3-deoxyheptonate aldolase</fullName>
    </alternativeName>
</protein>
<dbReference type="EC" id="2.5.1.54"/>
<dbReference type="UniPathway" id="UPA00053">
    <property type="reaction ID" value="UER00084"/>
</dbReference>
<dbReference type="GO" id="GO:0003849">
    <property type="term" value="F:3-deoxy-7-phosphoheptulonate synthase activity"/>
    <property type="evidence" value="ECO:0007669"/>
    <property type="project" value="UniProtKB-EC"/>
</dbReference>
<dbReference type="GO" id="GO:0008652">
    <property type="term" value="P:amino acid biosynthetic process"/>
    <property type="evidence" value="ECO:0007669"/>
    <property type="project" value="UniProtKB-KW"/>
</dbReference>
<dbReference type="GO" id="GO:0009073">
    <property type="term" value="P:aromatic amino acid family biosynthetic process"/>
    <property type="evidence" value="ECO:0007669"/>
    <property type="project" value="UniProtKB-KW"/>
</dbReference>
<dbReference type="GO" id="GO:0009423">
    <property type="term" value="P:chorismate biosynthetic process"/>
    <property type="evidence" value="ECO:0007669"/>
    <property type="project" value="UniProtKB-UniPathway"/>
</dbReference>
<keyword id="KW-0028">Amino-acid biosynthesis</keyword>
<keyword id="KW-0057">Aromatic amino acid biosynthesis</keyword>
<keyword id="KW-0903">Direct protein sequencing</keyword>
<keyword id="KW-0808">Transferase</keyword>
<evidence type="ECO:0000250" key="1"/>
<evidence type="ECO:0000305" key="2"/>
<reference key="1">
    <citation type="journal article" date="1996" name="Microbiology">
        <title>Evidence for a novel class of microbial 3-deoxy-D-arabino-heptulosonate-7-phosphate synthase in Streptomyces coelicolor A3(2), Streptomyces rimosus and Neurospora crassa.</title>
        <authorList>
            <person name="Walker G.E."/>
            <person name="Dunbar B."/>
            <person name="Hunter I.S."/>
            <person name="Nimmo H.G."/>
            <person name="Coggins J.R."/>
        </authorList>
    </citation>
    <scope>PROTEIN SEQUENCE</scope>
    <scope>CHARACTERIZATION</scope>
    <source>
        <strain>Isolate 4018</strain>
    </source>
</reference>
<name>AROF_STRRM</name>
<feature type="chain" id="PRO_0000140855" description="Phospho-2-dehydro-3-deoxyheptonate aldolase">
    <location>
        <begin position="1" status="less than"/>
        <end position="18" status="greater than"/>
    </location>
</feature>
<feature type="non-terminal residue">
    <location>
        <position position="1"/>
    </location>
</feature>
<feature type="non-terminal residue">
    <location>
        <position position="18"/>
    </location>
</feature>
<comment type="catalytic activity">
    <reaction>
        <text>D-erythrose 4-phosphate + phosphoenolpyruvate + H2O = 7-phospho-2-dehydro-3-deoxy-D-arabino-heptonate + phosphate</text>
        <dbReference type="Rhea" id="RHEA:14717"/>
        <dbReference type="ChEBI" id="CHEBI:15377"/>
        <dbReference type="ChEBI" id="CHEBI:16897"/>
        <dbReference type="ChEBI" id="CHEBI:43474"/>
        <dbReference type="ChEBI" id="CHEBI:58394"/>
        <dbReference type="ChEBI" id="CHEBI:58702"/>
        <dbReference type="EC" id="2.5.1.54"/>
    </reaction>
</comment>
<comment type="pathway">
    <text>Metabolic intermediate biosynthesis; chorismate biosynthesis; chorismate from D-erythrose 4-phosphate and phosphoenolpyruvate: step 1/7.</text>
</comment>
<comment type="subunit">
    <text evidence="1">Homodimer.</text>
</comment>
<comment type="PTM">
    <text>The N-terminus is blocked.</text>
</comment>
<comment type="similarity">
    <text evidence="2">Belongs to the class-II DAHP synthase family.</text>
</comment>
<proteinExistence type="evidence at protein level"/>
<accession>P80575</accession>
<sequence length="18" mass="2209">TRRFDDVLDEVKGFFEVH</sequence>
<gene>
    <name type="primary">aroH</name>
</gene>
<organism>
    <name type="scientific">Streptomyces rimosus</name>
    <dbReference type="NCBI Taxonomy" id="1927"/>
    <lineage>
        <taxon>Bacteria</taxon>
        <taxon>Bacillati</taxon>
        <taxon>Actinomycetota</taxon>
        <taxon>Actinomycetes</taxon>
        <taxon>Kitasatosporales</taxon>
        <taxon>Streptomycetaceae</taxon>
        <taxon>Streptomyces</taxon>
    </lineage>
</organism>